<keyword id="KW-0067">ATP-binding</keyword>
<keyword id="KW-0963">Cytoplasm</keyword>
<keyword id="KW-0227">DNA damage</keyword>
<keyword id="KW-0228">DNA excision</keyword>
<keyword id="KW-0234">DNA repair</keyword>
<keyword id="KW-0267">Excision nuclease</keyword>
<keyword id="KW-0547">Nucleotide-binding</keyword>
<keyword id="KW-1185">Reference proteome</keyword>
<keyword id="KW-0742">SOS response</keyword>
<feature type="chain" id="PRO_0000227382" description="UvrABC system protein B">
    <location>
        <begin position="1"/>
        <end position="645"/>
    </location>
</feature>
<feature type="domain" description="Helicase ATP-binding" evidence="1">
    <location>
        <begin position="24"/>
        <end position="414"/>
    </location>
</feature>
<feature type="domain" description="Helicase C-terminal" evidence="1">
    <location>
        <begin position="426"/>
        <end position="591"/>
    </location>
</feature>
<feature type="domain" description="UVR" evidence="1">
    <location>
        <begin position="610"/>
        <end position="645"/>
    </location>
</feature>
<feature type="short sequence motif" description="Beta-hairpin">
    <location>
        <begin position="90"/>
        <end position="113"/>
    </location>
</feature>
<feature type="binding site" evidence="1">
    <location>
        <begin position="37"/>
        <end position="44"/>
    </location>
    <ligand>
        <name>ATP</name>
        <dbReference type="ChEBI" id="CHEBI:30616"/>
    </ligand>
</feature>
<name>UVRB_WOLTR</name>
<reference key="1">
    <citation type="journal article" date="2005" name="PLoS Biol.">
        <title>The Wolbachia genome of Brugia malayi: endosymbiont evolution within a human pathogenic nematode.</title>
        <authorList>
            <person name="Foster J."/>
            <person name="Ganatra M."/>
            <person name="Kamal I."/>
            <person name="Ware J."/>
            <person name="Makarova K."/>
            <person name="Ivanova N."/>
            <person name="Bhattacharyya A."/>
            <person name="Kapatral V."/>
            <person name="Kumar S."/>
            <person name="Posfai J."/>
            <person name="Vincze T."/>
            <person name="Ingram J."/>
            <person name="Moran L."/>
            <person name="Lapidus A."/>
            <person name="Omelchenko M."/>
            <person name="Kyrpides N."/>
            <person name="Ghedin E."/>
            <person name="Wang S."/>
            <person name="Goltsman E."/>
            <person name="Joukov V."/>
            <person name="Ostrovskaya O."/>
            <person name="Tsukerman K."/>
            <person name="Mazur M."/>
            <person name="Comb D."/>
            <person name="Koonin E."/>
            <person name="Slatko B."/>
        </authorList>
    </citation>
    <scope>NUCLEOTIDE SEQUENCE [LARGE SCALE GENOMIC DNA]</scope>
    <source>
        <strain>TRS</strain>
    </source>
</reference>
<protein>
    <recommendedName>
        <fullName evidence="1">UvrABC system protein B</fullName>
        <shortName evidence="1">Protein UvrB</shortName>
    </recommendedName>
    <alternativeName>
        <fullName evidence="1">Excinuclease ABC subunit B</fullName>
    </alternativeName>
</protein>
<dbReference type="EMBL" id="AE017321">
    <property type="protein sequence ID" value="AAW71361.1"/>
    <property type="molecule type" value="Genomic_DNA"/>
</dbReference>
<dbReference type="RefSeq" id="WP_011256970.1">
    <property type="nucleotide sequence ID" value="NC_006833.1"/>
</dbReference>
<dbReference type="SMR" id="Q5GRL3"/>
<dbReference type="STRING" id="292805.Wbm0773"/>
<dbReference type="KEGG" id="wbm:Wbm0773"/>
<dbReference type="eggNOG" id="COG0556">
    <property type="taxonomic scope" value="Bacteria"/>
</dbReference>
<dbReference type="HOGENOM" id="CLU_009621_2_1_5"/>
<dbReference type="Proteomes" id="UP000000534">
    <property type="component" value="Chromosome"/>
</dbReference>
<dbReference type="GO" id="GO:0005737">
    <property type="term" value="C:cytoplasm"/>
    <property type="evidence" value="ECO:0007669"/>
    <property type="project" value="UniProtKB-SubCell"/>
</dbReference>
<dbReference type="GO" id="GO:0009380">
    <property type="term" value="C:excinuclease repair complex"/>
    <property type="evidence" value="ECO:0007669"/>
    <property type="project" value="InterPro"/>
</dbReference>
<dbReference type="GO" id="GO:0005524">
    <property type="term" value="F:ATP binding"/>
    <property type="evidence" value="ECO:0007669"/>
    <property type="project" value="UniProtKB-UniRule"/>
</dbReference>
<dbReference type="GO" id="GO:0016887">
    <property type="term" value="F:ATP hydrolysis activity"/>
    <property type="evidence" value="ECO:0007669"/>
    <property type="project" value="InterPro"/>
</dbReference>
<dbReference type="GO" id="GO:0003677">
    <property type="term" value="F:DNA binding"/>
    <property type="evidence" value="ECO:0007669"/>
    <property type="project" value="UniProtKB-UniRule"/>
</dbReference>
<dbReference type="GO" id="GO:0009381">
    <property type="term" value="F:excinuclease ABC activity"/>
    <property type="evidence" value="ECO:0007669"/>
    <property type="project" value="UniProtKB-UniRule"/>
</dbReference>
<dbReference type="GO" id="GO:0006289">
    <property type="term" value="P:nucleotide-excision repair"/>
    <property type="evidence" value="ECO:0007669"/>
    <property type="project" value="UniProtKB-UniRule"/>
</dbReference>
<dbReference type="GO" id="GO:0009432">
    <property type="term" value="P:SOS response"/>
    <property type="evidence" value="ECO:0007669"/>
    <property type="project" value="UniProtKB-UniRule"/>
</dbReference>
<dbReference type="CDD" id="cd17916">
    <property type="entry name" value="DEXHc_UvrB"/>
    <property type="match status" value="1"/>
</dbReference>
<dbReference type="Gene3D" id="3.40.50.300">
    <property type="entry name" value="P-loop containing nucleotide triphosphate hydrolases"/>
    <property type="match status" value="3"/>
</dbReference>
<dbReference type="Gene3D" id="4.10.860.10">
    <property type="entry name" value="UVR domain"/>
    <property type="match status" value="1"/>
</dbReference>
<dbReference type="HAMAP" id="MF_00204">
    <property type="entry name" value="UvrB"/>
    <property type="match status" value="1"/>
</dbReference>
<dbReference type="InterPro" id="IPR006935">
    <property type="entry name" value="Helicase/UvrB_N"/>
</dbReference>
<dbReference type="InterPro" id="IPR014001">
    <property type="entry name" value="Helicase_ATP-bd"/>
</dbReference>
<dbReference type="InterPro" id="IPR001650">
    <property type="entry name" value="Helicase_C-like"/>
</dbReference>
<dbReference type="InterPro" id="IPR027417">
    <property type="entry name" value="P-loop_NTPase"/>
</dbReference>
<dbReference type="InterPro" id="IPR001943">
    <property type="entry name" value="UVR_dom"/>
</dbReference>
<dbReference type="InterPro" id="IPR036876">
    <property type="entry name" value="UVR_dom_sf"/>
</dbReference>
<dbReference type="InterPro" id="IPR004807">
    <property type="entry name" value="UvrB"/>
</dbReference>
<dbReference type="InterPro" id="IPR041471">
    <property type="entry name" value="UvrB_inter"/>
</dbReference>
<dbReference type="InterPro" id="IPR024759">
    <property type="entry name" value="UvrB_YAD/RRR_dom"/>
</dbReference>
<dbReference type="NCBIfam" id="NF003673">
    <property type="entry name" value="PRK05298.1"/>
    <property type="match status" value="1"/>
</dbReference>
<dbReference type="NCBIfam" id="TIGR00631">
    <property type="entry name" value="uvrb"/>
    <property type="match status" value="1"/>
</dbReference>
<dbReference type="PANTHER" id="PTHR24029">
    <property type="entry name" value="UVRABC SYSTEM PROTEIN B"/>
    <property type="match status" value="1"/>
</dbReference>
<dbReference type="PANTHER" id="PTHR24029:SF0">
    <property type="entry name" value="UVRABC SYSTEM PROTEIN B"/>
    <property type="match status" value="1"/>
</dbReference>
<dbReference type="Pfam" id="PF00271">
    <property type="entry name" value="Helicase_C"/>
    <property type="match status" value="1"/>
</dbReference>
<dbReference type="Pfam" id="PF04851">
    <property type="entry name" value="ResIII"/>
    <property type="match status" value="1"/>
</dbReference>
<dbReference type="Pfam" id="PF02151">
    <property type="entry name" value="UVR"/>
    <property type="match status" value="1"/>
</dbReference>
<dbReference type="Pfam" id="PF12344">
    <property type="entry name" value="UvrB"/>
    <property type="match status" value="1"/>
</dbReference>
<dbReference type="Pfam" id="PF17757">
    <property type="entry name" value="UvrB_inter"/>
    <property type="match status" value="1"/>
</dbReference>
<dbReference type="SMART" id="SM00487">
    <property type="entry name" value="DEXDc"/>
    <property type="match status" value="1"/>
</dbReference>
<dbReference type="SMART" id="SM00490">
    <property type="entry name" value="HELICc"/>
    <property type="match status" value="1"/>
</dbReference>
<dbReference type="SUPFAM" id="SSF46600">
    <property type="entry name" value="C-terminal UvrC-binding domain of UvrB"/>
    <property type="match status" value="1"/>
</dbReference>
<dbReference type="SUPFAM" id="SSF52540">
    <property type="entry name" value="P-loop containing nucleoside triphosphate hydrolases"/>
    <property type="match status" value="2"/>
</dbReference>
<dbReference type="PROSITE" id="PS51192">
    <property type="entry name" value="HELICASE_ATP_BIND_1"/>
    <property type="match status" value="1"/>
</dbReference>
<dbReference type="PROSITE" id="PS51194">
    <property type="entry name" value="HELICASE_CTER"/>
    <property type="match status" value="1"/>
</dbReference>
<dbReference type="PROSITE" id="PS50151">
    <property type="entry name" value="UVR"/>
    <property type="match status" value="1"/>
</dbReference>
<sequence length="645" mass="73547">MKFQLVTHFQPAGDQPQAIDSLVAGLNDNKRDQVLLGVTGSGKTFTMANVIARTNRPALIIAHNKTLAAQLYEEMKGFFPHNAVEYFISYYDYYQPEAYLPQTDTYIEKDSVINERIDMLRYSAVCSLLERRDTIVVASVSCIYGLGSPESYLSMTITLSTGDRIRINDFLNDLANLQYKRSDIRFERGYFRMRGDVIDIFPAYYEDKAWRLLLIGNEIEGISEINAITGNIIKCIDKITIFPNSYHITSRETLLRAVQPIREELNERLDYYYSQNKIVEAQRLEQRTNFDIEMMVATGTCKGIENYSRYLYGMEAGDAPPTLFEYLPEDVILFVDESHVTVPQIGAMYNGNESRKKKLIDHGFRLPSAFDNRPLKFKEWESMRPQTIYISATPGKYELARTNNLFVEQVIRPTGITDPICIVKPAEAQVYDVVHEAQVTIKRGFCVLITTLTKKMAEKLAEHMSELNMKVSYLHSDISALERIDIVYKLRSKEIDVLIGVNLLREGLDIPECGLVAILDADKEGFLRSETSLIQTIGRAARNAESRAILYADKVTGSMDRALKETERRRKKQKKYSVLHNVLPKTIIKPISNTLKEKVVVKVTTIGMNKDTVSSLRKQMLAHAKNLEFEEAAKIKNIIGRINNL</sequence>
<accession>Q5GRL3</accession>
<comment type="function">
    <text evidence="1">The UvrABC repair system catalyzes the recognition and processing of DNA lesions. A damage recognition complex composed of 2 UvrA and 2 UvrB subunits scans DNA for abnormalities. Upon binding of the UvrA(2)B(2) complex to a putative damaged site, the DNA wraps around one UvrB monomer. DNA wrap is dependent on ATP binding by UvrB and probably causes local melting of the DNA helix, facilitating insertion of UvrB beta-hairpin between the DNA strands. Then UvrB probes one DNA strand for the presence of a lesion. If a lesion is found the UvrA subunits dissociate and the UvrB-DNA preincision complex is formed. This complex is subsequently bound by UvrC and the second UvrB is released. If no lesion is found, the DNA wraps around the other UvrB subunit that will check the other stand for damage.</text>
</comment>
<comment type="subunit">
    <text evidence="1">Forms a heterotetramer with UvrA during the search for lesions. Interacts with UvrC in an incision complex.</text>
</comment>
<comment type="subcellular location">
    <subcellularLocation>
        <location evidence="1">Cytoplasm</location>
    </subcellularLocation>
</comment>
<comment type="domain">
    <text evidence="1">The beta-hairpin motif is involved in DNA binding.</text>
</comment>
<comment type="similarity">
    <text evidence="1">Belongs to the UvrB family.</text>
</comment>
<gene>
    <name evidence="1" type="primary">uvrB</name>
    <name type="ordered locus">Wbm0773</name>
</gene>
<organism>
    <name type="scientific">Wolbachia sp. subsp. Brugia malayi (strain TRS)</name>
    <dbReference type="NCBI Taxonomy" id="292805"/>
    <lineage>
        <taxon>Bacteria</taxon>
        <taxon>Pseudomonadati</taxon>
        <taxon>Pseudomonadota</taxon>
        <taxon>Alphaproteobacteria</taxon>
        <taxon>Rickettsiales</taxon>
        <taxon>Anaplasmataceae</taxon>
        <taxon>Wolbachieae</taxon>
        <taxon>Wolbachia</taxon>
    </lineage>
</organism>
<evidence type="ECO:0000255" key="1">
    <source>
        <dbReference type="HAMAP-Rule" id="MF_00204"/>
    </source>
</evidence>
<proteinExistence type="inferred from homology"/>